<reference key="1">
    <citation type="journal article" date="1990" name="Eur. J. Biochem.">
        <title>Nitrous oxide reductase from denitrifying Pseudomonas stutzeri. Genes for copper-processing and properties of the deduced products, including a new member of the family of ATP/GTP-binding proteins.</title>
        <authorList>
            <person name="Zumft W.G."/>
            <person name="Viebrock-Sambale A."/>
            <person name="Braun C."/>
        </authorList>
    </citation>
    <scope>NUCLEOTIDE SEQUENCE [GENOMIC DNA]</scope>
    <scope>FUNCTION</scope>
    <scope>SUBCELLULAR LOCATION</scope>
    <source>
        <strain>ATCC 14405 / JCM 20778 / CIP 107696 / IAM 12931 / LMG 2243 / NCIMB 568 / Baumann 218 / ZoBell 632</strain>
    </source>
</reference>
<reference key="2">
    <citation type="journal article" date="2003" name="J. Bacteriol.">
        <title>Operon structure and regulation of the nos gene region of Pseudomonas stutzeri, encoding an ABC-Type ATPase for maturation of nitrous oxide reductase.</title>
        <authorList>
            <person name="Honisch U."/>
            <person name="Zumft W.G."/>
        </authorList>
    </citation>
    <scope>FUNCTION</scope>
    <scope>SUBUNIT</scope>
    <scope>INDUCTION</scope>
    <source>
        <strain>ATCC 14405 / JCM 20778 / CIP 107696 / IAM 12931 / LMG 2243 / NCIMB 568 / Baumann 218 / ZoBell 632</strain>
    </source>
</reference>
<evidence type="ECO:0000255" key="1"/>
<evidence type="ECO:0000269" key="2">
    <source>
    </source>
</evidence>
<evidence type="ECO:0000269" key="3">
    <source>
    </source>
</evidence>
<evidence type="ECO:0000303" key="4">
    <source>
    </source>
</evidence>
<evidence type="ECO:0000305" key="5"/>
<evidence type="ECO:0000305" key="6">
    <source>
    </source>
</evidence>
<evidence type="ECO:0007829" key="7">
    <source>
        <dbReference type="PDB" id="7O0Y"/>
    </source>
</evidence>
<evidence type="ECO:0007829" key="8">
    <source>
        <dbReference type="PDB" id="7O14"/>
    </source>
</evidence>
<evidence type="ECO:0007829" key="9">
    <source>
        <dbReference type="PDB" id="7ZNQ"/>
    </source>
</evidence>
<sequence>MFKAQATFSRYSAAVSLLLLFSGAAQAAPQSITTLPLQPDGENRWRLPAGEYQGQFTIEQPMQLRCEPGAVIQSQGQGSSLLISAPDVLVEGCTLYEWGSDLTAMDSAVFILPAAERAQISNNRMRGPGFGVFVDGTRDVQVIGNEIDGDAGVRSQDRGNGIHLFAVSGARVLHNHVRNARDGIYIDTSNGNHLEGNVIEDVRYGVHYMFANENSLIDNVTRRTRTGYALMQSRKLTVTGNRSEQDQNYGILMNYITYSTITGNFVSDVQRGDTGGDSMISGGEGKALFIYNSLFNTIENNHFEKSSLGIHLTAGSEDNRISGNAFVGNQQQVKYVASRTQEWSVDGRGNYWSDYLGWDRNNDGLGDIAYEPNDNVDRLLWLYPQVRLLMNSPSIEVLRWVQRAFPVIKSPGVQDSHPLMKLPTEKLLTEKQEPTS</sequence>
<proteinExistence type="evidence at protein level"/>
<dbReference type="EMBL" id="X53676">
    <property type="protein sequence ID" value="CAA37715.1"/>
    <property type="molecule type" value="Genomic_DNA"/>
</dbReference>
<dbReference type="PIR" id="S13583">
    <property type="entry name" value="S13583"/>
</dbReference>
<dbReference type="RefSeq" id="WP_036990777.1">
    <property type="nucleotide sequence ID" value="NZ_CP036186.1"/>
</dbReference>
<dbReference type="PDB" id="7O0Y">
    <property type="method" value="EM"/>
    <property type="resolution" value="3.30 A"/>
    <property type="chains" value="A=1-436"/>
</dbReference>
<dbReference type="PDB" id="7O10">
    <property type="method" value="EM"/>
    <property type="resolution" value="3.60 A"/>
    <property type="chains" value="A=1-436"/>
</dbReference>
<dbReference type="PDB" id="7O11">
    <property type="method" value="EM"/>
    <property type="resolution" value="3.70 A"/>
    <property type="chains" value="A=1-436"/>
</dbReference>
<dbReference type="PDB" id="7O12">
    <property type="method" value="EM"/>
    <property type="resolution" value="3.70 A"/>
    <property type="chains" value="A=1-436"/>
</dbReference>
<dbReference type="PDB" id="7O13">
    <property type="method" value="EM"/>
    <property type="resolution" value="3.60 A"/>
    <property type="chains" value="A=1-436"/>
</dbReference>
<dbReference type="PDB" id="7O14">
    <property type="method" value="EM"/>
    <property type="chains" value="A=1-436"/>
</dbReference>
<dbReference type="PDB" id="7O15">
    <property type="method" value="EM"/>
    <property type="chains" value="A=1-436"/>
</dbReference>
<dbReference type="PDB" id="7O16">
    <property type="method" value="EM"/>
    <property type="chains" value="A=1-436"/>
</dbReference>
<dbReference type="PDB" id="7O17">
    <property type="method" value="EM"/>
    <property type="resolution" value="4.50 A"/>
    <property type="chains" value="A=1-436"/>
</dbReference>
<dbReference type="PDB" id="7OSF">
    <property type="method" value="EM"/>
    <property type="resolution" value="3.80 A"/>
    <property type="chains" value="A=1-436"/>
</dbReference>
<dbReference type="PDB" id="7OSG">
    <property type="method" value="EM"/>
    <property type="resolution" value="3.30 A"/>
    <property type="chains" value="A=1-436"/>
</dbReference>
<dbReference type="PDB" id="7OSH">
    <property type="method" value="EM"/>
    <property type="resolution" value="3.80 A"/>
    <property type="chains" value="A=1-436"/>
</dbReference>
<dbReference type="PDB" id="7OSI">
    <property type="method" value="EM"/>
    <property type="resolution" value="3.80 A"/>
    <property type="chains" value="A=1-436"/>
</dbReference>
<dbReference type="PDB" id="7OSJ">
    <property type="method" value="EM"/>
    <property type="resolution" value="3.80 A"/>
    <property type="chains" value="A=1-436"/>
</dbReference>
<dbReference type="PDB" id="7QBA">
    <property type="method" value="EM"/>
    <property type="resolution" value="3.78 A"/>
    <property type="chains" value="A=1-436"/>
</dbReference>
<dbReference type="PDB" id="7ZNQ">
    <property type="method" value="EM"/>
    <property type="resolution" value="3.04 A"/>
    <property type="chains" value="D=1-436"/>
</dbReference>
<dbReference type="PDBsum" id="7O0Y"/>
<dbReference type="PDBsum" id="7O10"/>
<dbReference type="PDBsum" id="7O11"/>
<dbReference type="PDBsum" id="7O12"/>
<dbReference type="PDBsum" id="7O13"/>
<dbReference type="PDBsum" id="7O14"/>
<dbReference type="PDBsum" id="7O15"/>
<dbReference type="PDBsum" id="7O16"/>
<dbReference type="PDBsum" id="7O17"/>
<dbReference type="PDBsum" id="7OSF"/>
<dbReference type="PDBsum" id="7OSG"/>
<dbReference type="PDBsum" id="7OSH"/>
<dbReference type="PDBsum" id="7OSI"/>
<dbReference type="PDBsum" id="7OSJ"/>
<dbReference type="PDBsum" id="7QBA"/>
<dbReference type="PDBsum" id="7ZNQ"/>
<dbReference type="EMDB" id="EMD-12683"/>
<dbReference type="EMDB" id="EMD-12685"/>
<dbReference type="EMDB" id="EMD-12686"/>
<dbReference type="EMDB" id="EMD-12687"/>
<dbReference type="EMDB" id="EMD-12688"/>
<dbReference type="EMDB" id="EMD-12689"/>
<dbReference type="EMDB" id="EMD-12690"/>
<dbReference type="EMDB" id="EMD-12691"/>
<dbReference type="EMDB" id="EMD-12692"/>
<dbReference type="EMDB" id="EMD-13049"/>
<dbReference type="EMDB" id="EMD-13050"/>
<dbReference type="EMDB" id="EMD-13051"/>
<dbReference type="EMDB" id="EMD-13052"/>
<dbReference type="EMDB" id="EMD-13053"/>
<dbReference type="EMDB" id="EMD-13885"/>
<dbReference type="EMDB" id="EMD-14813"/>
<dbReference type="SMR" id="P19843"/>
<dbReference type="GO" id="GO:0042597">
    <property type="term" value="C:periplasmic space"/>
    <property type="evidence" value="ECO:0007669"/>
    <property type="project" value="UniProtKB-SubCell"/>
</dbReference>
<dbReference type="Gene3D" id="2.160.20.10">
    <property type="entry name" value="Single-stranded right-handed beta-helix, Pectin lyase-like"/>
    <property type="match status" value="2"/>
</dbReference>
<dbReference type="InterPro" id="IPR006633">
    <property type="entry name" value="Carb-bd_sugar_hydrolysis-dom"/>
</dbReference>
<dbReference type="InterPro" id="IPR026464">
    <property type="entry name" value="NosD_copper_fam"/>
</dbReference>
<dbReference type="InterPro" id="IPR007742">
    <property type="entry name" value="NosD_dom"/>
</dbReference>
<dbReference type="InterPro" id="IPR022441">
    <property type="entry name" value="Para_beta_helix_rpt-2"/>
</dbReference>
<dbReference type="InterPro" id="IPR006626">
    <property type="entry name" value="PbH1"/>
</dbReference>
<dbReference type="InterPro" id="IPR012334">
    <property type="entry name" value="Pectin_lyas_fold"/>
</dbReference>
<dbReference type="InterPro" id="IPR011050">
    <property type="entry name" value="Pectin_lyase_fold/virulence"/>
</dbReference>
<dbReference type="NCBIfam" id="TIGR04247">
    <property type="entry name" value="NosD_copper_fam"/>
    <property type="match status" value="1"/>
</dbReference>
<dbReference type="NCBIfam" id="TIGR03804">
    <property type="entry name" value="para_beta_helix"/>
    <property type="match status" value="2"/>
</dbReference>
<dbReference type="Pfam" id="PF05048">
    <property type="entry name" value="NosD"/>
    <property type="match status" value="1"/>
</dbReference>
<dbReference type="SMART" id="SM00722">
    <property type="entry name" value="CASH"/>
    <property type="match status" value="2"/>
</dbReference>
<dbReference type="SMART" id="SM00710">
    <property type="entry name" value="PbH1"/>
    <property type="match status" value="8"/>
</dbReference>
<dbReference type="SUPFAM" id="SSF51126">
    <property type="entry name" value="Pectin lyase-like"/>
    <property type="match status" value="1"/>
</dbReference>
<comment type="function">
    <text evidence="3 6">Required for the assembly of the copper chromophores of nitrous oxide reductase (PubMed:2170125). Could be part of the ABC transporter complex NosDFY (Probable).</text>
</comment>
<comment type="subunit">
    <text evidence="6">The complex may be composed of an ATP-binding protein (NosF), a transmembrane protein (NosY) and a solute-binding protein (NosD).</text>
</comment>
<comment type="subcellular location">
    <subcellularLocation>
        <location evidence="3">Periplasm</location>
    </subcellularLocation>
</comment>
<comment type="induction">
    <text evidence="2">Induced in response to denitrifying conditions. Activation requires NosR and DnrD regulators.</text>
</comment>
<comment type="similarity">
    <text evidence="5">Belongs to the NosD family.</text>
</comment>
<keyword id="KW-0002">3D-structure</keyword>
<keyword id="KW-0574">Periplasm</keyword>
<keyword id="KW-0677">Repeat</keyword>
<keyword id="KW-0732">Signal</keyword>
<accession>P19843</accession>
<protein>
    <recommendedName>
        <fullName evidence="5">Probable ABC transporter binding protein NosD</fullName>
    </recommendedName>
</protein>
<name>NOSD_STUST</name>
<gene>
    <name evidence="4" type="primary">nosD</name>
</gene>
<feature type="signal peptide" evidence="1">
    <location>
        <begin position="1"/>
        <end position="27"/>
    </location>
</feature>
<feature type="chain" id="PRO_0000031835" description="Probable ABC transporter binding protein NosD">
    <location>
        <begin position="28"/>
        <end position="436"/>
    </location>
</feature>
<feature type="repeat" description="PbH1 1" evidence="1">
    <location>
        <begin position="85"/>
        <end position="113"/>
    </location>
</feature>
<feature type="repeat" description="PbH1 2" evidence="1">
    <location>
        <begin position="115"/>
        <end position="136"/>
    </location>
</feature>
<feature type="repeat" description="PbH1 3" evidence="1">
    <location>
        <begin position="137"/>
        <end position="166"/>
    </location>
</feature>
<feature type="repeat" description="PbH1 4" evidence="1">
    <location>
        <begin position="167"/>
        <end position="188"/>
    </location>
</feature>
<feature type="repeat" description="PbH1 5" evidence="1">
    <location>
        <begin position="189"/>
        <end position="210"/>
    </location>
</feature>
<feature type="repeat" description="PbH1 6" evidence="1">
    <location>
        <begin position="233"/>
        <end position="255"/>
    </location>
</feature>
<feature type="repeat" description="PbH1 7" evidence="1">
    <location>
        <begin position="293"/>
        <end position="314"/>
    </location>
</feature>
<feature type="repeat" description="PbH1 8" evidence="1">
    <location>
        <begin position="316"/>
        <end position="354"/>
    </location>
</feature>
<feature type="helix" evidence="9">
    <location>
        <begin position="31"/>
        <end position="33"/>
    </location>
</feature>
<feature type="strand" evidence="8">
    <location>
        <begin position="37"/>
        <end position="40"/>
    </location>
</feature>
<feature type="turn" evidence="9">
    <location>
        <begin position="41"/>
        <end position="43"/>
    </location>
</feature>
<feature type="strand" evidence="7">
    <location>
        <begin position="44"/>
        <end position="47"/>
    </location>
</feature>
<feature type="strand" evidence="9">
    <location>
        <begin position="49"/>
        <end position="51"/>
    </location>
</feature>
<feature type="strand" evidence="7">
    <location>
        <begin position="52"/>
        <end position="54"/>
    </location>
</feature>
<feature type="strand" evidence="9">
    <location>
        <begin position="56"/>
        <end position="58"/>
    </location>
</feature>
<feature type="strand" evidence="7">
    <location>
        <begin position="63"/>
        <end position="66"/>
    </location>
</feature>
<feature type="strand" evidence="7">
    <location>
        <begin position="71"/>
        <end position="73"/>
    </location>
</feature>
<feature type="strand" evidence="7">
    <location>
        <begin position="76"/>
        <end position="78"/>
    </location>
</feature>
<feature type="strand" evidence="9">
    <location>
        <begin position="80"/>
        <end position="83"/>
    </location>
</feature>
<feature type="strand" evidence="9">
    <location>
        <begin position="85"/>
        <end position="87"/>
    </location>
</feature>
<feature type="strand" evidence="7">
    <location>
        <begin position="89"/>
        <end position="92"/>
    </location>
</feature>
<feature type="strand" evidence="9">
    <location>
        <begin position="94"/>
        <end position="96"/>
    </location>
</feature>
<feature type="turn" evidence="9">
    <location>
        <begin position="102"/>
        <end position="105"/>
    </location>
</feature>
<feature type="strand" evidence="7">
    <location>
        <begin position="107"/>
        <end position="111"/>
    </location>
</feature>
<feature type="strand" evidence="9">
    <location>
        <begin position="113"/>
        <end position="117"/>
    </location>
</feature>
<feature type="strand" evidence="7">
    <location>
        <begin position="119"/>
        <end position="122"/>
    </location>
</feature>
<feature type="strand" evidence="9">
    <location>
        <begin position="124"/>
        <end position="126"/>
    </location>
</feature>
<feature type="strand" evidence="9">
    <location>
        <begin position="131"/>
        <end position="136"/>
    </location>
</feature>
<feature type="strand" evidence="7">
    <location>
        <begin position="141"/>
        <end position="144"/>
    </location>
</feature>
<feature type="strand" evidence="9">
    <location>
        <begin position="146"/>
        <end position="148"/>
    </location>
</feature>
<feature type="strand" evidence="7">
    <location>
        <begin position="151"/>
        <end position="153"/>
    </location>
</feature>
<feature type="strand" evidence="9">
    <location>
        <begin position="155"/>
        <end position="157"/>
    </location>
</feature>
<feature type="strand" evidence="9">
    <location>
        <begin position="161"/>
        <end position="166"/>
    </location>
</feature>
<feature type="strand" evidence="9">
    <location>
        <begin position="168"/>
        <end position="174"/>
    </location>
</feature>
<feature type="strand" evidence="9">
    <location>
        <begin position="176"/>
        <end position="179"/>
    </location>
</feature>
<feature type="strand" evidence="9">
    <location>
        <begin position="184"/>
        <end position="188"/>
    </location>
</feature>
<feature type="strand" evidence="9">
    <location>
        <begin position="190"/>
        <end position="196"/>
    </location>
</feature>
<feature type="strand" evidence="9">
    <location>
        <begin position="198"/>
        <end position="201"/>
    </location>
</feature>
<feature type="strand" evidence="9">
    <location>
        <begin position="203"/>
        <end position="210"/>
    </location>
</feature>
<feature type="strand" evidence="9">
    <location>
        <begin position="215"/>
        <end position="218"/>
    </location>
</feature>
<feature type="strand" evidence="9">
    <location>
        <begin position="220"/>
        <end position="223"/>
    </location>
</feature>
<feature type="strand" evidence="9">
    <location>
        <begin position="225"/>
        <end position="232"/>
    </location>
</feature>
<feature type="strand" evidence="9">
    <location>
        <begin position="237"/>
        <end position="240"/>
    </location>
</feature>
<feature type="strand" evidence="9">
    <location>
        <begin position="242"/>
        <end position="245"/>
    </location>
</feature>
<feature type="strand" evidence="9">
    <location>
        <begin position="247"/>
        <end position="255"/>
    </location>
</feature>
<feature type="strand" evidence="9">
    <location>
        <begin position="260"/>
        <end position="263"/>
    </location>
</feature>
<feature type="strand" evidence="9">
    <location>
        <begin position="265"/>
        <end position="267"/>
    </location>
</feature>
<feature type="strand" evidence="7">
    <location>
        <begin position="278"/>
        <end position="280"/>
    </location>
</feature>
<feature type="strand" evidence="9">
    <location>
        <begin position="286"/>
        <end position="292"/>
    </location>
</feature>
<feature type="strand" evidence="9">
    <location>
        <begin position="297"/>
        <end position="300"/>
    </location>
</feature>
<feature type="strand" evidence="9">
    <location>
        <begin position="302"/>
        <end position="305"/>
    </location>
</feature>
<feature type="strand" evidence="9">
    <location>
        <begin position="307"/>
        <end position="312"/>
    </location>
</feature>
<feature type="strand" evidence="7">
    <location>
        <begin position="314"/>
        <end position="316"/>
    </location>
</feature>
<feature type="strand" evidence="9">
    <location>
        <begin position="320"/>
        <end position="323"/>
    </location>
</feature>
<feature type="strand" evidence="9">
    <location>
        <begin position="325"/>
        <end position="328"/>
    </location>
</feature>
<feature type="strand" evidence="9">
    <location>
        <begin position="330"/>
        <end position="334"/>
    </location>
</feature>
<feature type="strand" evidence="9">
    <location>
        <begin position="337"/>
        <end position="339"/>
    </location>
</feature>
<feature type="strand" evidence="9">
    <location>
        <begin position="363"/>
        <end position="365"/>
    </location>
</feature>
<feature type="helix" evidence="9">
    <location>
        <begin position="375"/>
        <end position="382"/>
    </location>
</feature>
<feature type="helix" evidence="9">
    <location>
        <begin position="384"/>
        <end position="387"/>
    </location>
</feature>
<feature type="strand" evidence="9">
    <location>
        <begin position="389"/>
        <end position="391"/>
    </location>
</feature>
<feature type="helix" evidence="9">
    <location>
        <begin position="393"/>
        <end position="404"/>
    </location>
</feature>
<feature type="strand" evidence="9">
    <location>
        <begin position="415"/>
        <end position="417"/>
    </location>
</feature>
<feature type="strand" evidence="9">
    <location>
        <begin position="419"/>
        <end position="421"/>
    </location>
</feature>
<feature type="turn" evidence="9">
    <location>
        <begin position="426"/>
        <end position="428"/>
    </location>
</feature>
<organism>
    <name type="scientific">Stutzerimonas stutzeri</name>
    <name type="common">Pseudomonas stutzeri</name>
    <dbReference type="NCBI Taxonomy" id="316"/>
    <lineage>
        <taxon>Bacteria</taxon>
        <taxon>Pseudomonadati</taxon>
        <taxon>Pseudomonadota</taxon>
        <taxon>Gammaproteobacteria</taxon>
        <taxon>Pseudomonadales</taxon>
        <taxon>Pseudomonadaceae</taxon>
        <taxon>Stutzerimonas</taxon>
    </lineage>
</organism>